<reference key="1">
    <citation type="journal article" date="2003" name="Lancet">
        <title>Genome sequence of Vibrio parahaemolyticus: a pathogenic mechanism distinct from that of V. cholerae.</title>
        <authorList>
            <person name="Makino K."/>
            <person name="Oshima K."/>
            <person name="Kurokawa K."/>
            <person name="Yokoyama K."/>
            <person name="Uda T."/>
            <person name="Tagomori K."/>
            <person name="Iijima Y."/>
            <person name="Najima M."/>
            <person name="Nakano M."/>
            <person name="Yamashita A."/>
            <person name="Kubota Y."/>
            <person name="Kimura S."/>
            <person name="Yasunaga T."/>
            <person name="Honda T."/>
            <person name="Shinagawa H."/>
            <person name="Hattori M."/>
            <person name="Iida T."/>
        </authorList>
    </citation>
    <scope>NUCLEOTIDE SEQUENCE [LARGE SCALE GENOMIC DNA]</scope>
    <source>
        <strain>RIMD 2210633</strain>
    </source>
</reference>
<protein>
    <recommendedName>
        <fullName>Catalase</fullName>
        <ecNumber>1.11.1.6</ecNumber>
    </recommendedName>
</protein>
<keyword id="KW-0349">Heme</keyword>
<keyword id="KW-0376">Hydrogen peroxide</keyword>
<keyword id="KW-0408">Iron</keyword>
<keyword id="KW-0479">Metal-binding</keyword>
<keyword id="KW-0560">Oxidoreductase</keyword>
<keyword id="KW-0574">Periplasm</keyword>
<keyword id="KW-0575">Peroxidase</keyword>
<keyword id="KW-0732">Signal</keyword>
<comment type="function">
    <text evidence="1">Decomposes hydrogen peroxide into water and oxygen; serves to protect cells from the toxic effects of hydrogen peroxide.</text>
</comment>
<comment type="catalytic activity">
    <reaction evidence="3">
        <text>2 H2O2 = O2 + 2 H2O</text>
        <dbReference type="Rhea" id="RHEA:20309"/>
        <dbReference type="ChEBI" id="CHEBI:15377"/>
        <dbReference type="ChEBI" id="CHEBI:15379"/>
        <dbReference type="ChEBI" id="CHEBI:16240"/>
        <dbReference type="EC" id="1.11.1.6"/>
    </reaction>
</comment>
<comment type="cofactor">
    <cofactor evidence="1">
        <name>heme</name>
        <dbReference type="ChEBI" id="CHEBI:30413"/>
    </cofactor>
</comment>
<comment type="subcellular location">
    <subcellularLocation>
        <location evidence="4">Periplasm</location>
    </subcellularLocation>
</comment>
<comment type="similarity">
    <text evidence="4">Belongs to the catalase family.</text>
</comment>
<comment type="sequence caution" evidence="4">
    <conflict type="erroneous initiation">
        <sequence resource="EMBL-CDS" id="BAC61648"/>
    </conflict>
</comment>
<proteinExistence type="inferred from homology"/>
<feature type="signal peptide" evidence="2">
    <location>
        <begin position="1"/>
        <end position="21"/>
    </location>
</feature>
<feature type="chain" id="PRO_0000004690" description="Catalase">
    <location>
        <begin position="22"/>
        <end position="504"/>
    </location>
</feature>
<feature type="active site" evidence="3">
    <location>
        <position position="72"/>
    </location>
</feature>
<feature type="active site" evidence="3">
    <location>
        <position position="145"/>
    </location>
</feature>
<feature type="binding site" description="axial binding residue" evidence="1">
    <location>
        <position position="353"/>
    </location>
    <ligand>
        <name>heme</name>
        <dbReference type="ChEBI" id="CHEBI:30413"/>
    </ligand>
    <ligandPart>
        <name>Fe</name>
        <dbReference type="ChEBI" id="CHEBI:18248"/>
    </ligandPart>
</feature>
<organism>
    <name type="scientific">Vibrio parahaemolyticus serotype O3:K6 (strain RIMD 2210633)</name>
    <dbReference type="NCBI Taxonomy" id="223926"/>
    <lineage>
        <taxon>Bacteria</taxon>
        <taxon>Pseudomonadati</taxon>
        <taxon>Pseudomonadota</taxon>
        <taxon>Gammaproteobacteria</taxon>
        <taxon>Vibrionales</taxon>
        <taxon>Vibrionaceae</taxon>
        <taxon>Vibrio</taxon>
    </lineage>
</organism>
<evidence type="ECO:0000250" key="1"/>
<evidence type="ECO:0000255" key="2"/>
<evidence type="ECO:0000255" key="3">
    <source>
        <dbReference type="PROSITE-ProRule" id="PRU10013"/>
    </source>
</evidence>
<evidence type="ECO:0000305" key="4"/>
<gene>
    <name type="ordered locus">VPA0305</name>
</gene>
<dbReference type="EC" id="1.11.1.6"/>
<dbReference type="EMBL" id="BA000032">
    <property type="protein sequence ID" value="BAC61648.1"/>
    <property type="status" value="ALT_INIT"/>
    <property type="molecule type" value="Genomic_DNA"/>
</dbReference>
<dbReference type="RefSeq" id="NP_799815.1">
    <property type="nucleotide sequence ID" value="NC_004605.1"/>
</dbReference>
<dbReference type="RefSeq" id="WP_021450939.1">
    <property type="nucleotide sequence ID" value="NC_004605.1"/>
</dbReference>
<dbReference type="SMR" id="Q87JE8"/>
<dbReference type="GeneID" id="1190993"/>
<dbReference type="KEGG" id="vpa:VPA0305"/>
<dbReference type="PATRIC" id="fig|223926.6.peg.3257"/>
<dbReference type="eggNOG" id="COG0753">
    <property type="taxonomic scope" value="Bacteria"/>
</dbReference>
<dbReference type="HOGENOM" id="CLU_010645_2_0_6"/>
<dbReference type="Proteomes" id="UP000002493">
    <property type="component" value="Chromosome 2"/>
</dbReference>
<dbReference type="GO" id="GO:0005737">
    <property type="term" value="C:cytoplasm"/>
    <property type="evidence" value="ECO:0007669"/>
    <property type="project" value="TreeGrafter"/>
</dbReference>
<dbReference type="GO" id="GO:0042597">
    <property type="term" value="C:periplasmic space"/>
    <property type="evidence" value="ECO:0007669"/>
    <property type="project" value="UniProtKB-SubCell"/>
</dbReference>
<dbReference type="GO" id="GO:0004096">
    <property type="term" value="F:catalase activity"/>
    <property type="evidence" value="ECO:0007669"/>
    <property type="project" value="UniProtKB-EC"/>
</dbReference>
<dbReference type="GO" id="GO:0020037">
    <property type="term" value="F:heme binding"/>
    <property type="evidence" value="ECO:0007669"/>
    <property type="project" value="InterPro"/>
</dbReference>
<dbReference type="GO" id="GO:0046872">
    <property type="term" value="F:metal ion binding"/>
    <property type="evidence" value="ECO:0007669"/>
    <property type="project" value="UniProtKB-KW"/>
</dbReference>
<dbReference type="GO" id="GO:0042744">
    <property type="term" value="P:hydrogen peroxide catabolic process"/>
    <property type="evidence" value="ECO:0007669"/>
    <property type="project" value="UniProtKB-KW"/>
</dbReference>
<dbReference type="GO" id="GO:0042542">
    <property type="term" value="P:response to hydrogen peroxide"/>
    <property type="evidence" value="ECO:0007669"/>
    <property type="project" value="TreeGrafter"/>
</dbReference>
<dbReference type="CDD" id="cd08154">
    <property type="entry name" value="catalase_clade_1"/>
    <property type="match status" value="1"/>
</dbReference>
<dbReference type="Gene3D" id="2.40.180.10">
    <property type="entry name" value="Catalase core domain"/>
    <property type="match status" value="1"/>
</dbReference>
<dbReference type="InterPro" id="IPR018028">
    <property type="entry name" value="Catalase"/>
</dbReference>
<dbReference type="InterPro" id="IPR024708">
    <property type="entry name" value="Catalase_AS"/>
</dbReference>
<dbReference type="InterPro" id="IPR024711">
    <property type="entry name" value="Catalase_clade1/3"/>
</dbReference>
<dbReference type="InterPro" id="IPR011614">
    <property type="entry name" value="Catalase_core"/>
</dbReference>
<dbReference type="InterPro" id="IPR002226">
    <property type="entry name" value="Catalase_haem_BS"/>
</dbReference>
<dbReference type="InterPro" id="IPR010582">
    <property type="entry name" value="Catalase_immune_responsive"/>
</dbReference>
<dbReference type="InterPro" id="IPR020835">
    <property type="entry name" value="Catalase_sf"/>
</dbReference>
<dbReference type="PANTHER" id="PTHR11465">
    <property type="entry name" value="CATALASE"/>
    <property type="match status" value="1"/>
</dbReference>
<dbReference type="PANTHER" id="PTHR11465:SF23">
    <property type="entry name" value="CATALASE-2"/>
    <property type="match status" value="1"/>
</dbReference>
<dbReference type="Pfam" id="PF00199">
    <property type="entry name" value="Catalase"/>
    <property type="match status" value="1"/>
</dbReference>
<dbReference type="Pfam" id="PF06628">
    <property type="entry name" value="Catalase-rel"/>
    <property type="match status" value="1"/>
</dbReference>
<dbReference type="PIRSF" id="PIRSF038928">
    <property type="entry name" value="Catalase_clade1-3"/>
    <property type="match status" value="1"/>
</dbReference>
<dbReference type="PRINTS" id="PR00067">
    <property type="entry name" value="CATALASE"/>
</dbReference>
<dbReference type="SMART" id="SM01060">
    <property type="entry name" value="Catalase"/>
    <property type="match status" value="1"/>
</dbReference>
<dbReference type="SUPFAM" id="SSF56634">
    <property type="entry name" value="Heme-dependent catalase-like"/>
    <property type="match status" value="1"/>
</dbReference>
<dbReference type="PROSITE" id="PS00437">
    <property type="entry name" value="CATALASE_1"/>
    <property type="match status" value="1"/>
</dbReference>
<dbReference type="PROSITE" id="PS00438">
    <property type="entry name" value="CATALASE_2"/>
    <property type="match status" value="1"/>
</dbReference>
<dbReference type="PROSITE" id="PS51402">
    <property type="entry name" value="CATALASE_3"/>
    <property type="match status" value="1"/>
</dbReference>
<sequence>MQMSKSFLLITVGLASTSLQAQTLTRDNGAPVGDNQNSITAGENGSVLLQDVHLIQKLQRFARERIPERVVHARGTGAHGEFVASGDFSDLTVSAPFTEKGKVTPVFVRFSTVIHSKGSPETLRDPRGFATKFYTEQGNWDLVGNNLPVFFIRDSIKFPDMVHSLKPSPVTNVQDPNRFFDFFSHEPSATHMLTWVYSNLGTPASYRTMDGFGVHAYKWINQQGDVNYVKFQWKSQQGIKSLRPNKVTEMQGKDFNHLTNDLYAAIGRGNYPKWDLYVKVLSPEALSKLDYNGLDATKVWLNVPDRKVGTMTLNRLPENFFLETEQSAFAPSNLIPGIEPSEDRLLQGRLFAYADTQLYRLGANLFQLPVNRPLTSVNNHNQNGLSNNAQLSNGDVNYEPSRKLNLAEDNQFKAVETKLVGTVQQKAISKPRDFYQAGVLYRSMNEQDRSDLIANLAGDLNKVIDKDIKATMVSYFYRADKEYGSRLAEATDTNLSQVKNKAMM</sequence>
<name>CATA_VIBPA</name>
<accession>Q87JE8</accession>